<proteinExistence type="evidence at transcript level"/>
<protein>
    <recommendedName>
        <fullName>Beta-defensin 107</fullName>
    </recommendedName>
    <alternativeName>
        <fullName>Beta-defensin 7</fullName>
        <shortName>BD-7</shortName>
        <shortName>DEFB-7</shortName>
    </alternativeName>
    <alternativeName>
        <fullName>Defensin, beta 107</fullName>
    </alternativeName>
</protein>
<organism>
    <name type="scientific">Homo sapiens</name>
    <name type="common">Human</name>
    <dbReference type="NCBI Taxonomy" id="9606"/>
    <lineage>
        <taxon>Eukaryota</taxon>
        <taxon>Metazoa</taxon>
        <taxon>Chordata</taxon>
        <taxon>Craniata</taxon>
        <taxon>Vertebrata</taxon>
        <taxon>Euteleostomi</taxon>
        <taxon>Mammalia</taxon>
        <taxon>Eutheria</taxon>
        <taxon>Euarchontoglires</taxon>
        <taxon>Primates</taxon>
        <taxon>Haplorrhini</taxon>
        <taxon>Catarrhini</taxon>
        <taxon>Hominidae</taxon>
        <taxon>Homo</taxon>
    </lineage>
</organism>
<feature type="signal peptide" evidence="2">
    <location>
        <begin position="1"/>
        <end position="26"/>
    </location>
</feature>
<feature type="peptide" id="PRO_0000006979" description="Beta-defensin 107">
    <location>
        <begin position="27"/>
        <end position="70"/>
    </location>
</feature>
<feature type="disulfide bond" evidence="1">
    <location>
        <begin position="41"/>
        <end position="55"/>
    </location>
</feature>
<feature type="disulfide bond" evidence="1">
    <location>
        <begin position="45"/>
        <end position="64"/>
    </location>
</feature>
<feature type="sequence conflict" description="In Ref. 5; AAM93909." evidence="3" ref="5">
    <original>V</original>
    <variation>F</variation>
    <location>
        <position position="9"/>
    </location>
</feature>
<accession>Q8IZN7</accession>
<accession>B2RPM1</accession>
<accession>Q30E75</accession>
<accession>Q8NET2</accession>
<dbReference type="EMBL" id="DQ119826">
    <property type="protein sequence ID" value="AAZ81951.1"/>
    <property type="status" value="ALT_INIT"/>
    <property type="molecule type" value="mRNA"/>
</dbReference>
<dbReference type="EMBL" id="AC134684">
    <property type="status" value="NOT_ANNOTATED_CDS"/>
    <property type="molecule type" value="Genomic_DNA"/>
</dbReference>
<dbReference type="EMBL" id="BC137510">
    <property type="protein sequence ID" value="AAI37511.1"/>
    <property type="molecule type" value="mRNA"/>
</dbReference>
<dbReference type="EMBL" id="BC137513">
    <property type="protein sequence ID" value="AAI37514.1"/>
    <property type="molecule type" value="mRNA"/>
</dbReference>
<dbReference type="EMBL" id="AF540979">
    <property type="protein sequence ID" value="AAN33115.1"/>
    <property type="molecule type" value="mRNA"/>
</dbReference>
<dbReference type="EMBL" id="AY122467">
    <property type="protein sequence ID" value="AAM93909.1"/>
    <property type="molecule type" value="mRNA"/>
</dbReference>
<dbReference type="CCDS" id="CCDS43696.1"/>
<dbReference type="CCDS" id="CCDS43699.1"/>
<dbReference type="RefSeq" id="NP_001032757.2">
    <property type="nucleotide sequence ID" value="NM_001037668.1"/>
</dbReference>
<dbReference type="RefSeq" id="NP_001035795.1">
    <property type="nucleotide sequence ID" value="NM_001040705.1"/>
</dbReference>
<dbReference type="SMR" id="Q8IZN7"/>
<dbReference type="BioGRID" id="128835">
    <property type="interactions" value="12"/>
</dbReference>
<dbReference type="BioGRID" id="139020">
    <property type="interactions" value="2"/>
</dbReference>
<dbReference type="FunCoup" id="Q8IZN7">
    <property type="interactions" value="2"/>
</dbReference>
<dbReference type="IntAct" id="Q8IZN7">
    <property type="interactions" value="12"/>
</dbReference>
<dbReference type="STRING" id="9606.ENSP00000334681"/>
<dbReference type="BioMuta" id="DEFB107A"/>
<dbReference type="DMDM" id="226694192"/>
<dbReference type="PaxDb" id="9606-ENSP00000334681"/>
<dbReference type="Antibodypedia" id="66838">
    <property type="antibodies" value="30 antibodies from 10 providers"/>
</dbReference>
<dbReference type="Antibodypedia" id="76576">
    <property type="antibodies" value="1 antibodies from 1 providers"/>
</dbReference>
<dbReference type="DNASU" id="503614"/>
<dbReference type="Ensembl" id="ENST00000335021.2">
    <property type="protein sequence ID" value="ENSP00000334681.2"/>
    <property type="gene ID" value="ENSG00000186572.2"/>
</dbReference>
<dbReference type="Ensembl" id="ENST00000355602.3">
    <property type="protein sequence ID" value="ENSP00000347810.2"/>
    <property type="gene ID" value="ENSG00000198129.3"/>
</dbReference>
<dbReference type="Ensembl" id="ENST00000615431.1">
    <property type="protein sequence ID" value="ENSP00000478422.1"/>
    <property type="gene ID" value="ENSG00000277530.1"/>
</dbReference>
<dbReference type="Ensembl" id="ENST00000642785.1">
    <property type="protein sequence ID" value="ENSP00000495534.1"/>
    <property type="gene ID" value="ENSG00000285432.1"/>
</dbReference>
<dbReference type="Ensembl" id="ENST00000646983.2">
    <property type="protein sequence ID" value="ENSP00000493774.1"/>
    <property type="gene ID" value="ENSG00000284979.2"/>
</dbReference>
<dbReference type="GeneID" id="245910"/>
<dbReference type="GeneID" id="503614"/>
<dbReference type="KEGG" id="hsa:245910"/>
<dbReference type="KEGG" id="hsa:503614"/>
<dbReference type="MANE-Select" id="ENST00000335021.2">
    <property type="protein sequence ID" value="ENSP00000334681.2"/>
    <property type="RefSeq nucleotide sequence ID" value="NM_001037668.1"/>
    <property type="RefSeq protein sequence ID" value="NP_001032757.2"/>
</dbReference>
<dbReference type="MANE-Select" id="ENST00000355602.3">
    <property type="protein sequence ID" value="ENSP00000347810.2"/>
    <property type="RefSeq nucleotide sequence ID" value="NM_001040705.2"/>
    <property type="RefSeq protein sequence ID" value="NP_001035795.1"/>
</dbReference>
<dbReference type="UCSC" id="uc003wrq.1">
    <property type="organism name" value="human"/>
</dbReference>
<dbReference type="AGR" id="HGNC:18086"/>
<dbReference type="AGR" id="HGNC:31918"/>
<dbReference type="CTD" id="245910"/>
<dbReference type="CTD" id="503614"/>
<dbReference type="DisGeNET" id="245910"/>
<dbReference type="DisGeNET" id="503614"/>
<dbReference type="GeneCards" id="DEFB107A"/>
<dbReference type="GeneCards" id="DEFB107B"/>
<dbReference type="HGNC" id="HGNC:18086">
    <property type="gene designation" value="DEFB107A"/>
</dbReference>
<dbReference type="HGNC" id="HGNC:31918">
    <property type="gene designation" value="DEFB107B"/>
</dbReference>
<dbReference type="HPA" id="ENSG00000186572">
    <property type="expression patterns" value="Tissue enriched (epididymis)"/>
</dbReference>
<dbReference type="HPA" id="ENSG00000198129">
    <property type="expression patterns" value="Tissue enriched (epididymis)"/>
</dbReference>
<dbReference type="neXtProt" id="NX_Q8IZN7"/>
<dbReference type="OpenTargets" id="ENSG00000186572"/>
<dbReference type="PharmGKB" id="PA142671993"/>
<dbReference type="VEuPathDB" id="HostDB:ENSG00000186572"/>
<dbReference type="VEuPathDB" id="HostDB:ENSG00000198129"/>
<dbReference type="eggNOG" id="ENOG502TF47">
    <property type="taxonomic scope" value="Eukaryota"/>
</dbReference>
<dbReference type="GeneTree" id="ENSGT00390000013953"/>
<dbReference type="HOGENOM" id="CLU_2757177_0_0_1"/>
<dbReference type="InParanoid" id="Q8IZN7"/>
<dbReference type="OMA" id="MPGAMRI"/>
<dbReference type="OrthoDB" id="9795234at2759"/>
<dbReference type="PAN-GO" id="Q8IZN7">
    <property type="GO annotations" value="1 GO annotation based on evolutionary models"/>
</dbReference>
<dbReference type="PhylomeDB" id="Q8IZN7"/>
<dbReference type="PathwayCommons" id="Q8IZN7"/>
<dbReference type="Reactome" id="R-HSA-1461957">
    <property type="pathway name" value="Beta defensins"/>
</dbReference>
<dbReference type="Reactome" id="R-HSA-1461973">
    <property type="pathway name" value="Defensins"/>
</dbReference>
<dbReference type="BioGRID-ORCS" id="245910">
    <property type="hits" value="11 hits in 218 CRISPR screens"/>
</dbReference>
<dbReference type="BioGRID-ORCS" id="503614">
    <property type="hits" value="6 hits in 911 CRISPR screens"/>
</dbReference>
<dbReference type="Pharos" id="Q8IZN7">
    <property type="development level" value="Tdark"/>
</dbReference>
<dbReference type="PRO" id="PR:Q8IZN7"/>
<dbReference type="Proteomes" id="UP000005640">
    <property type="component" value="Chromosome 8"/>
</dbReference>
<dbReference type="RNAct" id="Q8IZN7">
    <property type="molecule type" value="protein"/>
</dbReference>
<dbReference type="Bgee" id="ENSG00000186572">
    <property type="expression patterns" value="Expressed in male germ line stem cell (sensu Vertebrata) in testis and 23 other cell types or tissues"/>
</dbReference>
<dbReference type="GO" id="GO:0005576">
    <property type="term" value="C:extracellular region"/>
    <property type="evidence" value="ECO:0007669"/>
    <property type="project" value="UniProtKB-SubCell"/>
</dbReference>
<dbReference type="GO" id="GO:0008289">
    <property type="term" value="F:lipid binding"/>
    <property type="evidence" value="ECO:0000315"/>
    <property type="project" value="UniProtKB"/>
</dbReference>
<dbReference type="GO" id="GO:0042742">
    <property type="term" value="P:defense response to bacterium"/>
    <property type="evidence" value="ECO:0007669"/>
    <property type="project" value="UniProtKB-KW"/>
</dbReference>
<dbReference type="GO" id="GO:0045087">
    <property type="term" value="P:innate immune response"/>
    <property type="evidence" value="ECO:0007669"/>
    <property type="project" value="InterPro"/>
</dbReference>
<dbReference type="InterPro" id="IPR025933">
    <property type="entry name" value="Beta_defensin_dom"/>
</dbReference>
<dbReference type="Pfam" id="PF13841">
    <property type="entry name" value="Defensin_beta_2"/>
    <property type="match status" value="1"/>
</dbReference>
<comment type="function">
    <text evidence="3">Has antibacterial activity.</text>
</comment>
<comment type="subcellular location">
    <subcellularLocation>
        <location>Secreted</location>
    </subcellularLocation>
</comment>
<comment type="tissue specificity">
    <text>Specifically expressed in testis.</text>
</comment>
<comment type="similarity">
    <text evidence="3">Belongs to the beta-defensin family.</text>
</comment>
<comment type="caution">
    <text evidence="3">It is uncertain whether Met-1 or Met-5 is the initiator.</text>
</comment>
<comment type="sequence caution" evidence="3">
    <conflict type="erroneous initiation">
        <sequence resource="EMBL-CDS" id="AAZ81951"/>
    </conflict>
</comment>
<evidence type="ECO:0000250" key="1"/>
<evidence type="ECO:0000255" key="2"/>
<evidence type="ECO:0000305" key="3"/>
<name>D107A_HUMAN</name>
<sequence length="70" mass="7846">MPGAMKIFVFILAALILLAQIFQARTAIHRALISKRMEGHCEAECLTFEVKIGGCRAELAPFCCKNRKKH</sequence>
<keyword id="KW-0044">Antibiotic</keyword>
<keyword id="KW-0929">Antimicrobial</keyword>
<keyword id="KW-0211">Defensin</keyword>
<keyword id="KW-1015">Disulfide bond</keyword>
<keyword id="KW-1185">Reference proteome</keyword>
<keyword id="KW-0964">Secreted</keyword>
<keyword id="KW-0732">Signal</keyword>
<reference key="1">
    <citation type="journal article" date="2005" name="Physiol. Genomics">
        <title>Cross-species analysis of the mammalian beta-defensin gene family: presence of syntenic gene clusters and preferential expression in the male reproductive tract.</title>
        <authorList>
            <person name="Patil A.A."/>
            <person name="Cai Y."/>
            <person name="Sang Y."/>
            <person name="Blecha F."/>
            <person name="Zhang G."/>
        </authorList>
    </citation>
    <scope>NUCLEOTIDE SEQUENCE [MRNA]</scope>
</reference>
<reference key="2">
    <citation type="journal article" date="2006" name="Nature">
        <title>DNA sequence and analysis of human chromosome 8.</title>
        <authorList>
            <person name="Nusbaum C."/>
            <person name="Mikkelsen T.S."/>
            <person name="Zody M.C."/>
            <person name="Asakawa S."/>
            <person name="Taudien S."/>
            <person name="Garber M."/>
            <person name="Kodira C.D."/>
            <person name="Schueler M.G."/>
            <person name="Shimizu A."/>
            <person name="Whittaker C.A."/>
            <person name="Chang J.L."/>
            <person name="Cuomo C.A."/>
            <person name="Dewar K."/>
            <person name="FitzGerald M.G."/>
            <person name="Yang X."/>
            <person name="Allen N.R."/>
            <person name="Anderson S."/>
            <person name="Asakawa T."/>
            <person name="Blechschmidt K."/>
            <person name="Bloom T."/>
            <person name="Borowsky M.L."/>
            <person name="Butler J."/>
            <person name="Cook A."/>
            <person name="Corum B."/>
            <person name="DeArellano K."/>
            <person name="DeCaprio D."/>
            <person name="Dooley K.T."/>
            <person name="Dorris L. III"/>
            <person name="Engels R."/>
            <person name="Gloeckner G."/>
            <person name="Hafez N."/>
            <person name="Hagopian D.S."/>
            <person name="Hall J.L."/>
            <person name="Ishikawa S.K."/>
            <person name="Jaffe D.B."/>
            <person name="Kamat A."/>
            <person name="Kudoh J."/>
            <person name="Lehmann R."/>
            <person name="Lokitsang T."/>
            <person name="Macdonald P."/>
            <person name="Major J.E."/>
            <person name="Matthews C.D."/>
            <person name="Mauceli E."/>
            <person name="Menzel U."/>
            <person name="Mihalev A.H."/>
            <person name="Minoshima S."/>
            <person name="Murayama Y."/>
            <person name="Naylor J.W."/>
            <person name="Nicol R."/>
            <person name="Nguyen C."/>
            <person name="O'Leary S.B."/>
            <person name="O'Neill K."/>
            <person name="Parker S.C.J."/>
            <person name="Polley A."/>
            <person name="Raymond C.K."/>
            <person name="Reichwald K."/>
            <person name="Rodriguez J."/>
            <person name="Sasaki T."/>
            <person name="Schilhabel M."/>
            <person name="Siddiqui R."/>
            <person name="Smith C.L."/>
            <person name="Sneddon T.P."/>
            <person name="Talamas J.A."/>
            <person name="Tenzin P."/>
            <person name="Topham K."/>
            <person name="Venkataraman V."/>
            <person name="Wen G."/>
            <person name="Yamazaki S."/>
            <person name="Young S.K."/>
            <person name="Zeng Q."/>
            <person name="Zimmer A.R."/>
            <person name="Rosenthal A."/>
            <person name="Birren B.W."/>
            <person name="Platzer M."/>
            <person name="Shimizu N."/>
            <person name="Lander E.S."/>
        </authorList>
    </citation>
    <scope>NUCLEOTIDE SEQUENCE [LARGE SCALE GENOMIC DNA]</scope>
</reference>
<reference key="3">
    <citation type="journal article" date="2004" name="Genome Res.">
        <title>The status, quality, and expansion of the NIH full-length cDNA project: the Mammalian Gene Collection (MGC).</title>
        <authorList>
            <consortium name="The MGC Project Team"/>
        </authorList>
    </citation>
    <scope>NUCLEOTIDE SEQUENCE [LARGE SCALE MRNA]</scope>
</reference>
<reference key="4">
    <citation type="journal article" date="2003" name="Genome Biol.">
        <title>Duplication and selection in the evolution of primate beta-defensin genes.</title>
        <authorList>
            <person name="Semple C.A.M."/>
            <person name="Rolfe M."/>
            <person name="Dorin J.R."/>
        </authorList>
    </citation>
    <scope>NUCLEOTIDE SEQUENCE [MRNA] OF 5-67</scope>
</reference>
<reference key="5">
    <citation type="journal article" date="2002" name="Proc. Natl. Acad. Sci. U.S.A.">
        <title>Discovery of five conserved beta-defensin gene clusters using a computational search strategy.</title>
        <authorList>
            <person name="Schutte B.C."/>
            <person name="Mitros J.P."/>
            <person name="Bartlett J.A."/>
            <person name="Walters J.D."/>
            <person name="Jia H.P."/>
            <person name="Welsh M.J."/>
            <person name="Casavant T.L."/>
            <person name="McCray P.B. Jr."/>
        </authorList>
    </citation>
    <scope>NUCLEOTIDE SEQUENCE [MRNA] OF 5-64</scope>
    <source>
        <tissue>Testis</tissue>
    </source>
</reference>
<gene>
    <name type="primary">DEFB107A</name>
    <name type="synonym">DEFB107</name>
    <name type="synonym">DEFB7</name>
</gene>
<gene>
    <name type="primary">DEFB107B</name>
</gene>